<organism>
    <name type="scientific">Synechocystis sp. (strain ATCC 27184 / PCC 6803 / Kazusa)</name>
    <dbReference type="NCBI Taxonomy" id="1111708"/>
    <lineage>
        <taxon>Bacteria</taxon>
        <taxon>Bacillati</taxon>
        <taxon>Cyanobacteriota</taxon>
        <taxon>Cyanophyceae</taxon>
        <taxon>Synechococcales</taxon>
        <taxon>Merismopediaceae</taxon>
        <taxon>Synechocystis</taxon>
    </lineage>
</organism>
<feature type="initiator methionine" description="Removed" evidence="5">
    <location>
        <position position="1"/>
    </location>
</feature>
<feature type="chain" id="PRO_0000199223" description="Phycobilisome 32.1 kDa linker polypeptide, phycocyanin-associated, rod 1">
    <location>
        <begin position="2"/>
        <end position="291"/>
    </location>
</feature>
<feature type="domain" description="PBS-linker" evidence="3">
    <location>
        <begin position="2"/>
        <end position="179"/>
    </location>
</feature>
<feature type="domain" description="CpcD-like" evidence="2">
    <location>
        <begin position="236"/>
        <end position="288"/>
    </location>
</feature>
<feature type="helix" evidence="7">
    <location>
        <begin position="29"/>
        <end position="43"/>
    </location>
</feature>
<feature type="helix" evidence="7">
    <location>
        <begin position="51"/>
        <end position="53"/>
    </location>
</feature>
<feature type="helix" evidence="7">
    <location>
        <begin position="56"/>
        <end position="64"/>
    </location>
</feature>
<feature type="helix" evidence="7">
    <location>
        <begin position="69"/>
        <end position="77"/>
    </location>
</feature>
<feature type="helix" evidence="7">
    <location>
        <begin position="80"/>
        <end position="86"/>
    </location>
</feature>
<feature type="turn" evidence="7">
    <location>
        <begin position="87"/>
        <end position="89"/>
    </location>
</feature>
<feature type="helix" evidence="7">
    <location>
        <begin position="92"/>
        <end position="104"/>
    </location>
</feature>
<feature type="helix" evidence="7">
    <location>
        <begin position="111"/>
        <end position="124"/>
    </location>
</feature>
<feature type="helix" evidence="7">
    <location>
        <begin position="126"/>
        <end position="135"/>
    </location>
</feature>
<feature type="helix" evidence="7">
    <location>
        <begin position="137"/>
        <end position="142"/>
    </location>
</feature>
<feature type="turn" evidence="7">
    <location>
        <begin position="143"/>
        <end position="146"/>
    </location>
</feature>
<comment type="function">
    <text evidence="4">Rod linker protein, connecting hexameric phycocyanin (PC, made by cpcA and cpcB) rods in the phycobilisome (PBS). PC is the major phycobiliprotein in PBS rods. Linker polypeptides determine the state of aggregation and the location of the disk-shaped phycobiliprotein units within the phycobilisome and modulate their spectroscopic properties in order to mediate a directed and optimal energy transfer.</text>
</comment>
<comment type="subunit">
    <text evidence="4">Part of 2 PBS rod complexes, the conventional CpcG-PBS rod and a photosystem I-specific CpcL-PBS rod, both of which include ferredoxin--NADP reductase (petH). CpcG-PBS has on average 3 stacked phycocyanin hexamers (PC, CpcA and CpcB). Linker CpcG connects the PC stack to the thylakoid, the hexamers are linked by 1 copy of CpcC1, 1 copy of CpcC2 and the stack is terminated by a single copy of CpcD. The CpcL-PBS has on average 5 stacked phycocyanin hexamers (PC, CpcA and CpcB). Linker CpcL connects the PC stack to the thylakoid, the hexamers are linked by 1 copy of CpcC1, 3 copies of CpcC2 and the stack is terminated by a single copy of CpcD.</text>
</comment>
<comment type="subcellular location">
    <subcellularLocation>
        <location evidence="1">Cellular thylakoid membrane</location>
        <topology evidence="1">Peripheral membrane protein</topology>
        <orientation evidence="1">Cytoplasmic side</orientation>
    </subcellularLocation>
    <text evidence="4">This protein occurs in the rod, it is associated with phycocyanin.</text>
</comment>
<comment type="similarity">
    <text evidence="3">Belongs to the phycobilisome linker protein family.</text>
</comment>
<protein>
    <recommendedName>
        <fullName>Phycobilisome 32.1 kDa linker polypeptide, phycocyanin-associated, rod 1</fullName>
    </recommendedName>
</protein>
<dbReference type="EMBL" id="BA000022">
    <property type="protein sequence ID" value="BAA17229.1"/>
    <property type="molecule type" value="Genomic_DNA"/>
</dbReference>
<dbReference type="PIR" id="S75315">
    <property type="entry name" value="S75315"/>
</dbReference>
<dbReference type="PDB" id="3PRU">
    <property type="method" value="X-ray"/>
    <property type="resolution" value="2.68 A"/>
    <property type="chains" value="A/B/C/D=14-158"/>
</dbReference>
<dbReference type="PDB" id="7SC8">
    <property type="method" value="EM"/>
    <property type="resolution" value="2.10 A"/>
    <property type="chains" value="BL=1-291"/>
</dbReference>
<dbReference type="PDB" id="7SCA">
    <property type="method" value="EM"/>
    <property type="resolution" value="2.10 A"/>
    <property type="chains" value="BL=1-291"/>
</dbReference>
<dbReference type="PDB" id="8HFQ">
    <property type="method" value="EM"/>
    <property type="resolution" value="2.64 A"/>
    <property type="chains" value="k=1-291"/>
</dbReference>
<dbReference type="PDB" id="8TO5">
    <property type="method" value="EM"/>
    <property type="resolution" value="1.87 A"/>
    <property type="chains" value="b=1-291"/>
</dbReference>
<dbReference type="PDB" id="8TRO">
    <property type="method" value="EM"/>
    <property type="resolution" value="1.90 A"/>
    <property type="chains" value="b=1-291"/>
</dbReference>
<dbReference type="PDBsum" id="3PRU"/>
<dbReference type="PDBsum" id="7SC8"/>
<dbReference type="PDBsum" id="7SCA"/>
<dbReference type="PDBsum" id="8HFQ"/>
<dbReference type="PDBsum" id="8TO5"/>
<dbReference type="PDBsum" id="8TRO"/>
<dbReference type="EMDB" id="EMD-25029"/>
<dbReference type="EMDB" id="EMD-25031"/>
<dbReference type="EMDB" id="EMD-34724"/>
<dbReference type="EMDB" id="EMD-41435"/>
<dbReference type="EMDB" id="EMD-41585"/>
<dbReference type="SMR" id="P73203"/>
<dbReference type="IntAct" id="P73203">
    <property type="interactions" value="2"/>
</dbReference>
<dbReference type="STRING" id="1148.gene:10498092"/>
<dbReference type="PaxDb" id="1148-1652306"/>
<dbReference type="EnsemblBacteria" id="BAA17229">
    <property type="protein sequence ID" value="BAA17229"/>
    <property type="gene ID" value="BAA17229"/>
</dbReference>
<dbReference type="KEGG" id="syn:sll1580"/>
<dbReference type="eggNOG" id="COG0237">
    <property type="taxonomic scope" value="Bacteria"/>
</dbReference>
<dbReference type="InParanoid" id="P73203"/>
<dbReference type="PhylomeDB" id="P73203"/>
<dbReference type="EvolutionaryTrace" id="P73203"/>
<dbReference type="Proteomes" id="UP000001425">
    <property type="component" value="Chromosome"/>
</dbReference>
<dbReference type="GO" id="GO:0030089">
    <property type="term" value="C:phycobilisome"/>
    <property type="evidence" value="ECO:0007669"/>
    <property type="project" value="UniProtKB-KW"/>
</dbReference>
<dbReference type="GO" id="GO:0031676">
    <property type="term" value="C:plasma membrane-derived thylakoid membrane"/>
    <property type="evidence" value="ECO:0007669"/>
    <property type="project" value="UniProtKB-SubCell"/>
</dbReference>
<dbReference type="GO" id="GO:0015979">
    <property type="term" value="P:photosynthesis"/>
    <property type="evidence" value="ECO:0007669"/>
    <property type="project" value="UniProtKB-KW"/>
</dbReference>
<dbReference type="Gene3D" id="1.10.3130.20">
    <property type="entry name" value="Phycobilisome linker domain"/>
    <property type="match status" value="1"/>
</dbReference>
<dbReference type="InterPro" id="IPR008213">
    <property type="entry name" value="CpcD-like_dom"/>
</dbReference>
<dbReference type="InterPro" id="IPR001297">
    <property type="entry name" value="PBS_linker_dom"/>
</dbReference>
<dbReference type="InterPro" id="IPR038255">
    <property type="entry name" value="PBS_linker_sf"/>
</dbReference>
<dbReference type="InterPro" id="IPR016470">
    <property type="entry name" value="Phycobilisome"/>
</dbReference>
<dbReference type="PANTHER" id="PTHR34011:SF6">
    <property type="entry name" value="PHYCOBILIPROTEIN APCE"/>
    <property type="match status" value="1"/>
</dbReference>
<dbReference type="PANTHER" id="PTHR34011">
    <property type="entry name" value="PHYCOBILISOME 32.1 KDA LINKER POLYPEPTIDE, PHYCOCYANIN-ASSOCIATED, ROD 2-RELATED"/>
    <property type="match status" value="1"/>
</dbReference>
<dbReference type="Pfam" id="PF01383">
    <property type="entry name" value="CpcD"/>
    <property type="match status" value="1"/>
</dbReference>
<dbReference type="Pfam" id="PF00427">
    <property type="entry name" value="PBS_linker_poly"/>
    <property type="match status" value="1"/>
</dbReference>
<dbReference type="PIRSF" id="PIRSF005898">
    <property type="entry name" value="Phycobilisome_CpeC/CpcI"/>
    <property type="match status" value="1"/>
</dbReference>
<dbReference type="SMART" id="SM01094">
    <property type="entry name" value="CpcD"/>
    <property type="match status" value="1"/>
</dbReference>
<dbReference type="PROSITE" id="PS51441">
    <property type="entry name" value="CPCD_LIKE"/>
    <property type="match status" value="1"/>
</dbReference>
<dbReference type="PROSITE" id="PS51445">
    <property type="entry name" value="PBS_LINKER"/>
    <property type="match status" value="1"/>
</dbReference>
<accession>P73203</accession>
<gene>
    <name type="primary">cpcC1</name>
    <name type="ordered locus">sll1580</name>
</gene>
<sequence>MAITTAASRLGVAPYNESRPVELRPDFSLDDAKMVIRAVYRQVLGNDYIMDSERLKGAESLLTNGSISVREFVRTVAKSELYKKKFLYNNFQTRVIELNYKHLLGRAPFSEDEVIFHLDLYENQGFDADIDSYIDSVEYQENFGENIVPYYRFNNQVGDRTVGFTRMFRLYRGYANSDRSQLERSSSRLATELGQNTVSAIVGPSGSNAGWAYRPSRAGNTPAKALGGTVPFGQASKLFRVEITAISAPGYPKVRRSNKAVIVPFEQLNQTLQQINRLGGKVASITPASLS</sequence>
<keyword id="KW-0002">3D-structure</keyword>
<keyword id="KW-0042">Antenna complex</keyword>
<keyword id="KW-0903">Direct protein sequencing</keyword>
<keyword id="KW-0472">Membrane</keyword>
<keyword id="KW-0602">Photosynthesis</keyword>
<keyword id="KW-0605">Phycobilisome</keyword>
<keyword id="KW-1185">Reference proteome</keyword>
<keyword id="KW-0793">Thylakoid</keyword>
<name>PYR1_SYNY3</name>
<reference key="1">
    <citation type="journal article" date="1996" name="DNA Res.">
        <title>Sequence analysis of the genome of the unicellular cyanobacterium Synechocystis sp. strain PCC6803. II. Sequence determination of the entire genome and assignment of potential protein-coding regions.</title>
        <authorList>
            <person name="Kaneko T."/>
            <person name="Sato S."/>
            <person name="Kotani H."/>
            <person name="Tanaka A."/>
            <person name="Asamizu E."/>
            <person name="Nakamura Y."/>
            <person name="Miyajima N."/>
            <person name="Hirosawa M."/>
            <person name="Sugiura M."/>
            <person name="Sasamoto S."/>
            <person name="Kimura T."/>
            <person name="Hosouchi T."/>
            <person name="Matsuno A."/>
            <person name="Muraki A."/>
            <person name="Nakazaki N."/>
            <person name="Naruo K."/>
            <person name="Okumura S."/>
            <person name="Shimpo S."/>
            <person name="Takeuchi C."/>
            <person name="Wada T."/>
            <person name="Watanabe A."/>
            <person name="Yamada M."/>
            <person name="Yasuda M."/>
            <person name="Tabata S."/>
        </authorList>
    </citation>
    <scope>NUCLEOTIDE SEQUENCE [LARGE SCALE GENOMIC DNA]</scope>
    <source>
        <strain>ATCC 27184 / PCC 6803 / Kazusa</strain>
    </source>
</reference>
<reference key="2">
    <citation type="journal article" date="1997" name="Electrophoresis">
        <title>Towards a proteome project of cyanobacterium Synechocystis sp. strain PCC6803: linking 130 protein spots with their respective genes.</title>
        <authorList>
            <person name="Sazuka T."/>
            <person name="Ohara O."/>
        </authorList>
    </citation>
    <scope>PROTEIN SEQUENCE OF 2-21</scope>
</reference>
<reference key="3">
    <citation type="journal article" date="2019" name="MBio">
        <title>Phycobilisomes Harbor FNRL in Cyanobacteria.</title>
        <authorList>
            <person name="Liu H."/>
            <person name="Weisz D.A."/>
            <person name="Zhang M.M."/>
            <person name="Cheng M."/>
            <person name="Zhang B."/>
            <person name="Zhang H."/>
            <person name="Gerstenecker G.S."/>
            <person name="Pakrasi H.B."/>
            <person name="Gross M.L."/>
            <person name="Blankenship R.E."/>
        </authorList>
    </citation>
    <scope>SUBUNIT</scope>
    <scope>SUBCELLULAR LOCATION</scope>
    <source>
        <strain>ATCC 27184 / PCC 6803 / Kazusa</strain>
    </source>
</reference>
<reference evidence="6" key="4">
    <citation type="submission" date="2010-11" db="PDB data bank">
        <title>Northeast Structural Genomics Consortium Target SgR182A.</title>
        <authorList>
            <person name="Kuzin A."/>
            <person name="Su M."/>
            <person name="Patel P."/>
            <person name="Xiao R."/>
            <person name="Ciccosanti C."/>
            <person name="Lee D."/>
            <person name="Everett J.K."/>
            <person name="Nair R."/>
            <person name="Acton T.B."/>
            <person name="Rost B."/>
            <person name="Montelione G.T."/>
            <person name="Tong L."/>
            <person name="Hunt J.F."/>
        </authorList>
    </citation>
    <scope>X-RAY CRYSTALLOGRAPHY (2.68 ANGSTROMS) OF 14-158</scope>
    <source>
        <strain>ATCC 27184 / PCC 6803 / Kazusa</strain>
    </source>
</reference>
<proteinExistence type="evidence at protein level"/>
<evidence type="ECO:0000250" key="1"/>
<evidence type="ECO:0000255" key="2">
    <source>
        <dbReference type="PROSITE-ProRule" id="PRU00771"/>
    </source>
</evidence>
<evidence type="ECO:0000255" key="3">
    <source>
        <dbReference type="PROSITE-ProRule" id="PRU00775"/>
    </source>
</evidence>
<evidence type="ECO:0000269" key="4">
    <source>
    </source>
</evidence>
<evidence type="ECO:0000269" key="5">
    <source>
    </source>
</evidence>
<evidence type="ECO:0007744" key="6">
    <source>
        <dbReference type="PDB" id="3PRU"/>
    </source>
</evidence>
<evidence type="ECO:0007829" key="7">
    <source>
        <dbReference type="PDB" id="3PRU"/>
    </source>
</evidence>